<reference key="1">
    <citation type="journal article" date="2007" name="Proc. Natl. Acad. Sci. U.S.A.">
        <title>Deep-sea vent epsilon-proteobacterial genomes provide insights into emergence of pathogens.</title>
        <authorList>
            <person name="Nakagawa S."/>
            <person name="Takaki Y."/>
            <person name="Shimamura S."/>
            <person name="Reysenbach A.-L."/>
            <person name="Takai K."/>
            <person name="Horikoshi K."/>
        </authorList>
    </citation>
    <scope>NUCLEOTIDE SEQUENCE [LARGE SCALE GENOMIC DNA]</scope>
    <source>
        <strain>SB155-2</strain>
    </source>
</reference>
<dbReference type="EMBL" id="AP009178">
    <property type="protein sequence ID" value="BAF70715.1"/>
    <property type="molecule type" value="Genomic_DNA"/>
</dbReference>
<dbReference type="RefSeq" id="WP_012082978.1">
    <property type="nucleotide sequence ID" value="NC_009662.1"/>
</dbReference>
<dbReference type="SMR" id="A6Q5F6"/>
<dbReference type="FunCoup" id="A6Q5F6">
    <property type="interactions" value="562"/>
</dbReference>
<dbReference type="STRING" id="387092.NIS_1609"/>
<dbReference type="KEGG" id="nis:NIS_1609"/>
<dbReference type="eggNOG" id="COG0103">
    <property type="taxonomic scope" value="Bacteria"/>
</dbReference>
<dbReference type="HOGENOM" id="CLU_046483_2_1_7"/>
<dbReference type="InParanoid" id="A6Q5F6"/>
<dbReference type="OrthoDB" id="9803965at2"/>
<dbReference type="Proteomes" id="UP000001118">
    <property type="component" value="Chromosome"/>
</dbReference>
<dbReference type="GO" id="GO:0022627">
    <property type="term" value="C:cytosolic small ribosomal subunit"/>
    <property type="evidence" value="ECO:0007669"/>
    <property type="project" value="TreeGrafter"/>
</dbReference>
<dbReference type="GO" id="GO:0003723">
    <property type="term" value="F:RNA binding"/>
    <property type="evidence" value="ECO:0007669"/>
    <property type="project" value="TreeGrafter"/>
</dbReference>
<dbReference type="GO" id="GO:0003735">
    <property type="term" value="F:structural constituent of ribosome"/>
    <property type="evidence" value="ECO:0007669"/>
    <property type="project" value="InterPro"/>
</dbReference>
<dbReference type="GO" id="GO:0006412">
    <property type="term" value="P:translation"/>
    <property type="evidence" value="ECO:0007669"/>
    <property type="project" value="UniProtKB-UniRule"/>
</dbReference>
<dbReference type="FunFam" id="3.30.230.10:FF:000001">
    <property type="entry name" value="30S ribosomal protein S9"/>
    <property type="match status" value="1"/>
</dbReference>
<dbReference type="Gene3D" id="3.30.230.10">
    <property type="match status" value="1"/>
</dbReference>
<dbReference type="HAMAP" id="MF_00532_B">
    <property type="entry name" value="Ribosomal_uS9_B"/>
    <property type="match status" value="1"/>
</dbReference>
<dbReference type="InterPro" id="IPR020568">
    <property type="entry name" value="Ribosomal_Su5_D2-typ_SF"/>
</dbReference>
<dbReference type="InterPro" id="IPR000754">
    <property type="entry name" value="Ribosomal_uS9"/>
</dbReference>
<dbReference type="InterPro" id="IPR023035">
    <property type="entry name" value="Ribosomal_uS9_bac/plastid"/>
</dbReference>
<dbReference type="InterPro" id="IPR020574">
    <property type="entry name" value="Ribosomal_uS9_CS"/>
</dbReference>
<dbReference type="InterPro" id="IPR014721">
    <property type="entry name" value="Ribsml_uS5_D2-typ_fold_subgr"/>
</dbReference>
<dbReference type="NCBIfam" id="NF001099">
    <property type="entry name" value="PRK00132.1"/>
    <property type="match status" value="1"/>
</dbReference>
<dbReference type="PANTHER" id="PTHR21569">
    <property type="entry name" value="RIBOSOMAL PROTEIN S9"/>
    <property type="match status" value="1"/>
</dbReference>
<dbReference type="PANTHER" id="PTHR21569:SF1">
    <property type="entry name" value="SMALL RIBOSOMAL SUBUNIT PROTEIN US9M"/>
    <property type="match status" value="1"/>
</dbReference>
<dbReference type="Pfam" id="PF00380">
    <property type="entry name" value="Ribosomal_S9"/>
    <property type="match status" value="1"/>
</dbReference>
<dbReference type="SUPFAM" id="SSF54211">
    <property type="entry name" value="Ribosomal protein S5 domain 2-like"/>
    <property type="match status" value="1"/>
</dbReference>
<dbReference type="PROSITE" id="PS00360">
    <property type="entry name" value="RIBOSOMAL_S9"/>
    <property type="match status" value="1"/>
</dbReference>
<accession>A6Q5F6</accession>
<protein>
    <recommendedName>
        <fullName evidence="1">Small ribosomal subunit protein uS9</fullName>
    </recommendedName>
    <alternativeName>
        <fullName evidence="2">30S ribosomal protein S9</fullName>
    </alternativeName>
</protein>
<keyword id="KW-1185">Reference proteome</keyword>
<keyword id="KW-0687">Ribonucleoprotein</keyword>
<keyword id="KW-0689">Ribosomal protein</keyword>
<organism>
    <name type="scientific">Nitratiruptor sp. (strain SB155-2)</name>
    <dbReference type="NCBI Taxonomy" id="387092"/>
    <lineage>
        <taxon>Bacteria</taxon>
        <taxon>Pseudomonadati</taxon>
        <taxon>Campylobacterota</taxon>
        <taxon>Epsilonproteobacteria</taxon>
        <taxon>Nautiliales</taxon>
        <taxon>Nitratiruptoraceae</taxon>
        <taxon>Nitratiruptor</taxon>
    </lineage>
</organism>
<feature type="chain" id="PRO_1000051270" description="Small ribosomal subunit protein uS9">
    <location>
        <begin position="1"/>
        <end position="129"/>
    </location>
</feature>
<comment type="similarity">
    <text evidence="1">Belongs to the universal ribosomal protein uS9 family.</text>
</comment>
<gene>
    <name evidence="1" type="primary">rpsI</name>
    <name type="ordered locus">NIS_1609</name>
</gene>
<name>RS9_NITSB</name>
<evidence type="ECO:0000255" key="1">
    <source>
        <dbReference type="HAMAP-Rule" id="MF_00532"/>
    </source>
</evidence>
<evidence type="ECO:0000305" key="2"/>
<sequence length="129" mass="14144">MSRIYATGKRKTAVAKVWLTKGSGKITVNGMSLDEWLGGHEALKLRVRLPLALTKMSESVDVVATTLGGGYSAQADALKHGISKALCAMDDNLRSVLKPHGLLTRDARVVERKKYGKHKARRSPQFSKR</sequence>
<proteinExistence type="inferred from homology"/>